<keyword id="KW-0131">Cell cycle</keyword>
<keyword id="KW-0132">Cell division</keyword>
<keyword id="KW-0143">Chaperone</keyword>
<keyword id="KW-0963">Cytoplasm</keyword>
<keyword id="KW-0413">Isomerase</keyword>
<keyword id="KW-1185">Reference proteome</keyword>
<keyword id="KW-0697">Rotamase</keyword>
<feature type="chain" id="PRO_0000179453" description="Trigger factor">
    <location>
        <begin position="1"/>
        <end position="432"/>
    </location>
</feature>
<feature type="domain" description="PPIase FKBP-type" evidence="1">
    <location>
        <begin position="163"/>
        <end position="248"/>
    </location>
</feature>
<dbReference type="EC" id="5.2.1.8" evidence="1"/>
<dbReference type="EMBL" id="AE008691">
    <property type="protein sequence ID" value="AAM23893.1"/>
    <property type="molecule type" value="Genomic_DNA"/>
</dbReference>
<dbReference type="RefSeq" id="WP_011025038.1">
    <property type="nucleotide sequence ID" value="NC_003869.1"/>
</dbReference>
<dbReference type="SMR" id="Q8RC26"/>
<dbReference type="STRING" id="273068.TTE0624"/>
<dbReference type="KEGG" id="tte:TTE0624"/>
<dbReference type="eggNOG" id="COG0544">
    <property type="taxonomic scope" value="Bacteria"/>
</dbReference>
<dbReference type="HOGENOM" id="CLU_033058_3_2_9"/>
<dbReference type="OrthoDB" id="9767721at2"/>
<dbReference type="Proteomes" id="UP000000555">
    <property type="component" value="Chromosome"/>
</dbReference>
<dbReference type="GO" id="GO:0005737">
    <property type="term" value="C:cytoplasm"/>
    <property type="evidence" value="ECO:0007669"/>
    <property type="project" value="UniProtKB-SubCell"/>
</dbReference>
<dbReference type="GO" id="GO:0003755">
    <property type="term" value="F:peptidyl-prolyl cis-trans isomerase activity"/>
    <property type="evidence" value="ECO:0007669"/>
    <property type="project" value="UniProtKB-UniRule"/>
</dbReference>
<dbReference type="GO" id="GO:0044183">
    <property type="term" value="F:protein folding chaperone"/>
    <property type="evidence" value="ECO:0007669"/>
    <property type="project" value="TreeGrafter"/>
</dbReference>
<dbReference type="GO" id="GO:0043022">
    <property type="term" value="F:ribosome binding"/>
    <property type="evidence" value="ECO:0007669"/>
    <property type="project" value="TreeGrafter"/>
</dbReference>
<dbReference type="GO" id="GO:0051083">
    <property type="term" value="P:'de novo' cotranslational protein folding"/>
    <property type="evidence" value="ECO:0007669"/>
    <property type="project" value="TreeGrafter"/>
</dbReference>
<dbReference type="GO" id="GO:0051301">
    <property type="term" value="P:cell division"/>
    <property type="evidence" value="ECO:0007669"/>
    <property type="project" value="UniProtKB-KW"/>
</dbReference>
<dbReference type="GO" id="GO:0061077">
    <property type="term" value="P:chaperone-mediated protein folding"/>
    <property type="evidence" value="ECO:0007669"/>
    <property type="project" value="TreeGrafter"/>
</dbReference>
<dbReference type="GO" id="GO:0015031">
    <property type="term" value="P:protein transport"/>
    <property type="evidence" value="ECO:0007669"/>
    <property type="project" value="UniProtKB-UniRule"/>
</dbReference>
<dbReference type="GO" id="GO:0043335">
    <property type="term" value="P:protein unfolding"/>
    <property type="evidence" value="ECO:0007669"/>
    <property type="project" value="TreeGrafter"/>
</dbReference>
<dbReference type="FunFam" id="3.10.50.40:FF:000001">
    <property type="entry name" value="Trigger factor"/>
    <property type="match status" value="1"/>
</dbReference>
<dbReference type="Gene3D" id="3.10.50.40">
    <property type="match status" value="1"/>
</dbReference>
<dbReference type="Gene3D" id="3.30.70.1050">
    <property type="entry name" value="Trigger factor ribosome-binding domain"/>
    <property type="match status" value="1"/>
</dbReference>
<dbReference type="Gene3D" id="1.10.3120.10">
    <property type="entry name" value="Trigger factor, C-terminal domain"/>
    <property type="match status" value="1"/>
</dbReference>
<dbReference type="HAMAP" id="MF_00303">
    <property type="entry name" value="Trigger_factor_Tig"/>
    <property type="match status" value="1"/>
</dbReference>
<dbReference type="InterPro" id="IPR046357">
    <property type="entry name" value="PPIase_dom_sf"/>
</dbReference>
<dbReference type="InterPro" id="IPR001179">
    <property type="entry name" value="PPIase_FKBP_dom"/>
</dbReference>
<dbReference type="InterPro" id="IPR005215">
    <property type="entry name" value="Trig_fac"/>
</dbReference>
<dbReference type="InterPro" id="IPR008880">
    <property type="entry name" value="Trigger_fac_C"/>
</dbReference>
<dbReference type="InterPro" id="IPR037041">
    <property type="entry name" value="Trigger_fac_C_sf"/>
</dbReference>
<dbReference type="InterPro" id="IPR008881">
    <property type="entry name" value="Trigger_fac_ribosome-bd_bac"/>
</dbReference>
<dbReference type="InterPro" id="IPR036611">
    <property type="entry name" value="Trigger_fac_ribosome-bd_sf"/>
</dbReference>
<dbReference type="InterPro" id="IPR027304">
    <property type="entry name" value="Trigger_fact/SurA_dom_sf"/>
</dbReference>
<dbReference type="NCBIfam" id="TIGR00115">
    <property type="entry name" value="tig"/>
    <property type="match status" value="1"/>
</dbReference>
<dbReference type="PANTHER" id="PTHR30560">
    <property type="entry name" value="TRIGGER FACTOR CHAPERONE AND PEPTIDYL-PROLYL CIS/TRANS ISOMERASE"/>
    <property type="match status" value="1"/>
</dbReference>
<dbReference type="PANTHER" id="PTHR30560:SF3">
    <property type="entry name" value="TRIGGER FACTOR-LIKE PROTEIN TIG, CHLOROPLASTIC"/>
    <property type="match status" value="1"/>
</dbReference>
<dbReference type="Pfam" id="PF00254">
    <property type="entry name" value="FKBP_C"/>
    <property type="match status" value="1"/>
</dbReference>
<dbReference type="Pfam" id="PF05698">
    <property type="entry name" value="Trigger_C"/>
    <property type="match status" value="1"/>
</dbReference>
<dbReference type="Pfam" id="PF05697">
    <property type="entry name" value="Trigger_N"/>
    <property type="match status" value="1"/>
</dbReference>
<dbReference type="PIRSF" id="PIRSF003095">
    <property type="entry name" value="Trigger_factor"/>
    <property type="match status" value="1"/>
</dbReference>
<dbReference type="SUPFAM" id="SSF54534">
    <property type="entry name" value="FKBP-like"/>
    <property type="match status" value="1"/>
</dbReference>
<dbReference type="SUPFAM" id="SSF109998">
    <property type="entry name" value="Triger factor/SurA peptide-binding domain-like"/>
    <property type="match status" value="1"/>
</dbReference>
<dbReference type="SUPFAM" id="SSF102735">
    <property type="entry name" value="Trigger factor ribosome-binding domain"/>
    <property type="match status" value="1"/>
</dbReference>
<dbReference type="PROSITE" id="PS50059">
    <property type="entry name" value="FKBP_PPIASE"/>
    <property type="match status" value="1"/>
</dbReference>
<gene>
    <name evidence="1" type="primary">tig</name>
    <name type="ordered locus">TTE0624</name>
</gene>
<accession>Q8RC26</accession>
<protein>
    <recommendedName>
        <fullName evidence="1">Trigger factor</fullName>
        <shortName evidence="1">TF</shortName>
        <ecNumber evidence="1">5.2.1.8</ecNumber>
    </recommendedName>
    <alternativeName>
        <fullName evidence="1">PPIase</fullName>
    </alternativeName>
</protein>
<name>TIG_CALS4</name>
<evidence type="ECO:0000255" key="1">
    <source>
        <dbReference type="HAMAP-Rule" id="MF_00303"/>
    </source>
</evidence>
<reference key="1">
    <citation type="journal article" date="2002" name="Genome Res.">
        <title>A complete sequence of the T. tengcongensis genome.</title>
        <authorList>
            <person name="Bao Q."/>
            <person name="Tian Y."/>
            <person name="Li W."/>
            <person name="Xu Z."/>
            <person name="Xuan Z."/>
            <person name="Hu S."/>
            <person name="Dong W."/>
            <person name="Yang J."/>
            <person name="Chen Y."/>
            <person name="Xue Y."/>
            <person name="Xu Y."/>
            <person name="Lai X."/>
            <person name="Huang L."/>
            <person name="Dong X."/>
            <person name="Ma Y."/>
            <person name="Ling L."/>
            <person name="Tan H."/>
            <person name="Chen R."/>
            <person name="Wang J."/>
            <person name="Yu J."/>
            <person name="Yang H."/>
        </authorList>
    </citation>
    <scope>NUCLEOTIDE SEQUENCE [LARGE SCALE GENOMIC DNA]</scope>
    <source>
        <strain>DSM 15242 / JCM 11007 / NBRC 100824 / MB4</strain>
    </source>
</reference>
<comment type="function">
    <text evidence="1">Involved in protein export. Acts as a chaperone by maintaining the newly synthesized protein in an open conformation. Functions as a peptidyl-prolyl cis-trans isomerase.</text>
</comment>
<comment type="catalytic activity">
    <reaction evidence="1">
        <text>[protein]-peptidylproline (omega=180) = [protein]-peptidylproline (omega=0)</text>
        <dbReference type="Rhea" id="RHEA:16237"/>
        <dbReference type="Rhea" id="RHEA-COMP:10747"/>
        <dbReference type="Rhea" id="RHEA-COMP:10748"/>
        <dbReference type="ChEBI" id="CHEBI:83833"/>
        <dbReference type="ChEBI" id="CHEBI:83834"/>
        <dbReference type="EC" id="5.2.1.8"/>
    </reaction>
</comment>
<comment type="subcellular location">
    <subcellularLocation>
        <location>Cytoplasm</location>
    </subcellularLocation>
    <text evidence="1">About half TF is bound to the ribosome near the polypeptide exit tunnel while the other half is free in the cytoplasm.</text>
</comment>
<comment type="domain">
    <text evidence="1">Consists of 3 domains; the N-terminus binds the ribosome, the middle domain has PPIase activity, while the C-terminus has intrinsic chaperone activity on its own.</text>
</comment>
<comment type="similarity">
    <text evidence="1">Belongs to the FKBP-type PPIase family. Tig subfamily.</text>
</comment>
<organism>
    <name type="scientific">Caldanaerobacter subterraneus subsp. tengcongensis (strain DSM 15242 / JCM 11007 / NBRC 100824 / MB4)</name>
    <name type="common">Thermoanaerobacter tengcongensis</name>
    <dbReference type="NCBI Taxonomy" id="273068"/>
    <lineage>
        <taxon>Bacteria</taxon>
        <taxon>Bacillati</taxon>
        <taxon>Bacillota</taxon>
        <taxon>Clostridia</taxon>
        <taxon>Thermoanaerobacterales</taxon>
        <taxon>Thermoanaerobacteraceae</taxon>
        <taxon>Caldanaerobacter</taxon>
    </lineage>
</organism>
<sequence length="432" mass="49762">MGASLKKIEKSVATLELTIPKEKFEEGLDYAFKKNASKFNVPGFRKGKAPRFLVERYYGEGVLYEDAIEYVFHEAYQEALKTFNLEPVDYPDINILQIGKGKDLVLEATVAVMPEVELGEYKGIEIEKIEYDVYDGDVEYELEKLRQQNARIIPVEGRPAEQGDIAVIDFEGYIDDKPFEGGKGENYELELGSNTFVPGFEDQIISHNVGETFDVTVTFPEDYRVEELKGKTAVFKVTLKALNKKELPELDDEFAKDVSEFETLEELKQDIRKKLEEKNKREAENEMKEKAVMKVVENAKVDIPDVMVERQIDLSLRDLDYNLRLQGLDLNTYLSITGKTIQDLRKEMWEGALNRVKTQLVIDKIAKVENIEATEEELENKLKELAESYRVNLEEFKKSLTESQINGIKEDIAYYKTIDFIFNQCKIVSKEE</sequence>
<proteinExistence type="inferred from homology"/>